<feature type="chain" id="PRO_1000147159" description="HTH-type transcriptional regulator UlaR">
    <location>
        <begin position="1"/>
        <end position="251"/>
    </location>
</feature>
<feature type="domain" description="HTH deoR-type" evidence="1">
    <location>
        <begin position="3"/>
        <end position="58"/>
    </location>
</feature>
<feature type="DNA-binding region" description="H-T-H motif" evidence="1">
    <location>
        <begin position="20"/>
        <end position="39"/>
    </location>
</feature>
<evidence type="ECO:0000255" key="1">
    <source>
        <dbReference type="HAMAP-Rule" id="MF_01563"/>
    </source>
</evidence>
<protein>
    <recommendedName>
        <fullName evidence="1">HTH-type transcriptional regulator UlaR</fullName>
    </recommendedName>
</protein>
<dbReference type="EMBL" id="CU928161">
    <property type="protein sequence ID" value="CAR05926.1"/>
    <property type="molecule type" value="Genomic_DNA"/>
</dbReference>
<dbReference type="RefSeq" id="WP_000133631.1">
    <property type="nucleotide sequence ID" value="NC_011742.1"/>
</dbReference>
<dbReference type="SMR" id="B7MLJ6"/>
<dbReference type="GeneID" id="75202425"/>
<dbReference type="KEGG" id="ecz:ECS88_4777"/>
<dbReference type="HOGENOM" id="CLU_060699_3_2_6"/>
<dbReference type="Proteomes" id="UP000000747">
    <property type="component" value="Chromosome"/>
</dbReference>
<dbReference type="GO" id="GO:0005737">
    <property type="term" value="C:cytoplasm"/>
    <property type="evidence" value="ECO:0007669"/>
    <property type="project" value="UniProtKB-SubCell"/>
</dbReference>
<dbReference type="GO" id="GO:0003677">
    <property type="term" value="F:DNA binding"/>
    <property type="evidence" value="ECO:0007669"/>
    <property type="project" value="UniProtKB-KW"/>
</dbReference>
<dbReference type="GO" id="GO:0003700">
    <property type="term" value="F:DNA-binding transcription factor activity"/>
    <property type="evidence" value="ECO:0007669"/>
    <property type="project" value="InterPro"/>
</dbReference>
<dbReference type="GO" id="GO:0045892">
    <property type="term" value="P:negative regulation of DNA-templated transcription"/>
    <property type="evidence" value="ECO:0007669"/>
    <property type="project" value="UniProtKB-UniRule"/>
</dbReference>
<dbReference type="FunFam" id="1.10.10.10:FF:000160">
    <property type="entry name" value="HTH-type transcriptional regulator UlaR"/>
    <property type="match status" value="1"/>
</dbReference>
<dbReference type="Gene3D" id="1.10.10.10">
    <property type="entry name" value="Winged helix-like DNA-binding domain superfamily/Winged helix DNA-binding domain"/>
    <property type="match status" value="1"/>
</dbReference>
<dbReference type="HAMAP" id="MF_01563">
    <property type="entry name" value="HTH_type_UlaR"/>
    <property type="match status" value="1"/>
</dbReference>
<dbReference type="InterPro" id="IPR050313">
    <property type="entry name" value="Carb_Metab_HTH_regulators"/>
</dbReference>
<dbReference type="InterPro" id="IPR014036">
    <property type="entry name" value="DeoR-like_C"/>
</dbReference>
<dbReference type="InterPro" id="IPR001034">
    <property type="entry name" value="DeoR_HTH"/>
</dbReference>
<dbReference type="InterPro" id="IPR037171">
    <property type="entry name" value="NagB/RpiA_transferase-like"/>
</dbReference>
<dbReference type="InterPro" id="IPR018356">
    <property type="entry name" value="Tscrpt_reg_HTH_DeoR_CS"/>
</dbReference>
<dbReference type="InterPro" id="IPR023711">
    <property type="entry name" value="Tscrpt_reg_HTH_UlaR"/>
</dbReference>
<dbReference type="InterPro" id="IPR036388">
    <property type="entry name" value="WH-like_DNA-bd_sf"/>
</dbReference>
<dbReference type="InterPro" id="IPR036390">
    <property type="entry name" value="WH_DNA-bd_sf"/>
</dbReference>
<dbReference type="NCBIfam" id="NF010034">
    <property type="entry name" value="PRK13509.1"/>
    <property type="match status" value="1"/>
</dbReference>
<dbReference type="PANTHER" id="PTHR30363">
    <property type="entry name" value="HTH-TYPE TRANSCRIPTIONAL REGULATOR SRLR-RELATED"/>
    <property type="match status" value="1"/>
</dbReference>
<dbReference type="PANTHER" id="PTHR30363:SF55">
    <property type="entry name" value="HTH-TYPE TRANSCRIPTIONAL REGULATOR ULAR"/>
    <property type="match status" value="1"/>
</dbReference>
<dbReference type="Pfam" id="PF00455">
    <property type="entry name" value="DeoRC"/>
    <property type="match status" value="1"/>
</dbReference>
<dbReference type="Pfam" id="PF08220">
    <property type="entry name" value="HTH_DeoR"/>
    <property type="match status" value="1"/>
</dbReference>
<dbReference type="PRINTS" id="PR00037">
    <property type="entry name" value="HTHLACR"/>
</dbReference>
<dbReference type="SMART" id="SM01134">
    <property type="entry name" value="DeoRC"/>
    <property type="match status" value="1"/>
</dbReference>
<dbReference type="SMART" id="SM00420">
    <property type="entry name" value="HTH_DEOR"/>
    <property type="match status" value="1"/>
</dbReference>
<dbReference type="SUPFAM" id="SSF100950">
    <property type="entry name" value="NagB/RpiA/CoA transferase-like"/>
    <property type="match status" value="1"/>
</dbReference>
<dbReference type="SUPFAM" id="SSF46785">
    <property type="entry name" value="Winged helix' DNA-binding domain"/>
    <property type="match status" value="1"/>
</dbReference>
<dbReference type="PROSITE" id="PS00894">
    <property type="entry name" value="HTH_DEOR_1"/>
    <property type="match status" value="1"/>
</dbReference>
<dbReference type="PROSITE" id="PS51000">
    <property type="entry name" value="HTH_DEOR_2"/>
    <property type="match status" value="1"/>
</dbReference>
<reference key="1">
    <citation type="journal article" date="2009" name="PLoS Genet.">
        <title>Organised genome dynamics in the Escherichia coli species results in highly diverse adaptive paths.</title>
        <authorList>
            <person name="Touchon M."/>
            <person name="Hoede C."/>
            <person name="Tenaillon O."/>
            <person name="Barbe V."/>
            <person name="Baeriswyl S."/>
            <person name="Bidet P."/>
            <person name="Bingen E."/>
            <person name="Bonacorsi S."/>
            <person name="Bouchier C."/>
            <person name="Bouvet O."/>
            <person name="Calteau A."/>
            <person name="Chiapello H."/>
            <person name="Clermont O."/>
            <person name="Cruveiller S."/>
            <person name="Danchin A."/>
            <person name="Diard M."/>
            <person name="Dossat C."/>
            <person name="Karoui M.E."/>
            <person name="Frapy E."/>
            <person name="Garry L."/>
            <person name="Ghigo J.M."/>
            <person name="Gilles A.M."/>
            <person name="Johnson J."/>
            <person name="Le Bouguenec C."/>
            <person name="Lescat M."/>
            <person name="Mangenot S."/>
            <person name="Martinez-Jehanne V."/>
            <person name="Matic I."/>
            <person name="Nassif X."/>
            <person name="Oztas S."/>
            <person name="Petit M.A."/>
            <person name="Pichon C."/>
            <person name="Rouy Z."/>
            <person name="Ruf C.S."/>
            <person name="Schneider D."/>
            <person name="Tourret J."/>
            <person name="Vacherie B."/>
            <person name="Vallenet D."/>
            <person name="Medigue C."/>
            <person name="Rocha E.P.C."/>
            <person name="Denamur E."/>
        </authorList>
    </citation>
    <scope>NUCLEOTIDE SEQUENCE [LARGE SCALE GENOMIC DNA]</scope>
    <source>
        <strain>S88 / ExPEC</strain>
    </source>
</reference>
<organism>
    <name type="scientific">Escherichia coli O45:K1 (strain S88 / ExPEC)</name>
    <dbReference type="NCBI Taxonomy" id="585035"/>
    <lineage>
        <taxon>Bacteria</taxon>
        <taxon>Pseudomonadati</taxon>
        <taxon>Pseudomonadota</taxon>
        <taxon>Gammaproteobacteria</taxon>
        <taxon>Enterobacterales</taxon>
        <taxon>Enterobacteriaceae</taxon>
        <taxon>Escherichia</taxon>
    </lineage>
</organism>
<sequence length="251" mass="27602">MTEAQRHQILLEMLAQLGFVTVEKVVERLGISPATARRDINKLDESGKLKKVRNGAEAITQQRPRWTPMNLHQAQNHDEKVRIAKAASQLVNPGESVVINCGSTAFLLGREMCGKPVQIITNYLPLANYLIDQEHDSVIIMGGQYNKSQSITLSPQGSENSLYAGHWMFTSGKGLTAEGLYKTDMLTAMAEQKMLSVVGKLVVLVDSSKIGERAGMLFSRADQIDMLITGKNANPEILQQLEAQGVSILRV</sequence>
<keyword id="KW-0963">Cytoplasm</keyword>
<keyword id="KW-0238">DNA-binding</keyword>
<keyword id="KW-1185">Reference proteome</keyword>
<keyword id="KW-0678">Repressor</keyword>
<keyword id="KW-0804">Transcription</keyword>
<keyword id="KW-0805">Transcription regulation</keyword>
<gene>
    <name evidence="1" type="primary">ulaR</name>
    <name type="ordered locus">ECS88_4777</name>
</gene>
<accession>B7MLJ6</accession>
<proteinExistence type="inferred from homology"/>
<comment type="function">
    <text evidence="1">Represses ulaG and the ulaABCDEF operon.</text>
</comment>
<comment type="subcellular location">
    <subcellularLocation>
        <location evidence="1">Cytoplasm</location>
    </subcellularLocation>
</comment>
<name>ULAR_ECO45</name>